<accession>Q8PTC3</accession>
<protein>
    <recommendedName>
        <fullName evidence="1">Probable molybdenum cofactor guanylyltransferase</fullName>
        <shortName evidence="1">MoCo guanylyltransferase</shortName>
        <ecNumber evidence="1">2.7.7.77</ecNumber>
    </recommendedName>
    <alternativeName>
        <fullName evidence="1">GTP:molybdopterin guanylyltransferase</fullName>
    </alternativeName>
    <alternativeName>
        <fullName evidence="1">Mo-MPT guanylyltransferase</fullName>
    </alternativeName>
    <alternativeName>
        <fullName evidence="1">Molybdopterin guanylyltransferase</fullName>
    </alternativeName>
    <alternativeName>
        <fullName evidence="1">Molybdopterin-guanine dinucleotide synthase</fullName>
        <shortName evidence="1">MGD synthase</shortName>
    </alternativeName>
</protein>
<comment type="function">
    <text evidence="1">Transfers a GMP moiety from GTP to Mo-molybdopterin (Mo-MPT) cofactor (Moco or molybdenum cofactor) to form Mo-molybdopterin guanine dinucleotide (Mo-MGD) cofactor.</text>
</comment>
<comment type="catalytic activity">
    <reaction evidence="1">
        <text>Mo-molybdopterin + GTP + H(+) = Mo-molybdopterin guanine dinucleotide + diphosphate</text>
        <dbReference type="Rhea" id="RHEA:34243"/>
        <dbReference type="ChEBI" id="CHEBI:15378"/>
        <dbReference type="ChEBI" id="CHEBI:33019"/>
        <dbReference type="ChEBI" id="CHEBI:37565"/>
        <dbReference type="ChEBI" id="CHEBI:71302"/>
        <dbReference type="ChEBI" id="CHEBI:71310"/>
        <dbReference type="EC" id="2.7.7.77"/>
    </reaction>
</comment>
<comment type="cofactor">
    <cofactor evidence="1">
        <name>Mg(2+)</name>
        <dbReference type="ChEBI" id="CHEBI:18420"/>
    </cofactor>
</comment>
<comment type="subcellular location">
    <subcellularLocation>
        <location evidence="1">Cytoplasm</location>
    </subcellularLocation>
</comment>
<comment type="domain">
    <text evidence="1">The N-terminal domain determines nucleotide recognition and specific binding, while the C-terminal domain determines the specific binding to the target protein.</text>
</comment>
<comment type="similarity">
    <text evidence="1">Belongs to the MobA family.</text>
</comment>
<organism>
    <name type="scientific">Methanosarcina mazei (strain ATCC BAA-159 / DSM 3647 / Goe1 / Go1 / JCM 11833 / OCM 88)</name>
    <name type="common">Methanosarcina frisia</name>
    <dbReference type="NCBI Taxonomy" id="192952"/>
    <lineage>
        <taxon>Archaea</taxon>
        <taxon>Methanobacteriati</taxon>
        <taxon>Methanobacteriota</taxon>
        <taxon>Stenosarchaea group</taxon>
        <taxon>Methanomicrobia</taxon>
        <taxon>Methanosarcinales</taxon>
        <taxon>Methanosarcinaceae</taxon>
        <taxon>Methanosarcina</taxon>
    </lineage>
</organism>
<dbReference type="EC" id="2.7.7.77" evidence="1"/>
<dbReference type="EMBL" id="AE008384">
    <property type="protein sequence ID" value="AAM32489.1"/>
    <property type="molecule type" value="Genomic_DNA"/>
</dbReference>
<dbReference type="RefSeq" id="WP_011034702.1">
    <property type="nucleotide sequence ID" value="NC_003901.1"/>
</dbReference>
<dbReference type="SMR" id="Q8PTC3"/>
<dbReference type="KEGG" id="mma:MM_2793"/>
<dbReference type="PATRIC" id="fig|192952.21.peg.3223"/>
<dbReference type="eggNOG" id="arCOG01872">
    <property type="taxonomic scope" value="Archaea"/>
</dbReference>
<dbReference type="HOGENOM" id="CLU_055597_2_1_2"/>
<dbReference type="Proteomes" id="UP000000595">
    <property type="component" value="Chromosome"/>
</dbReference>
<dbReference type="GO" id="GO:0005737">
    <property type="term" value="C:cytoplasm"/>
    <property type="evidence" value="ECO:0007669"/>
    <property type="project" value="UniProtKB-SubCell"/>
</dbReference>
<dbReference type="GO" id="GO:0005525">
    <property type="term" value="F:GTP binding"/>
    <property type="evidence" value="ECO:0007669"/>
    <property type="project" value="UniProtKB-UniRule"/>
</dbReference>
<dbReference type="GO" id="GO:0046872">
    <property type="term" value="F:metal ion binding"/>
    <property type="evidence" value="ECO:0007669"/>
    <property type="project" value="UniProtKB-KW"/>
</dbReference>
<dbReference type="GO" id="GO:0061603">
    <property type="term" value="F:molybdenum cofactor guanylyltransferase activity"/>
    <property type="evidence" value="ECO:0007669"/>
    <property type="project" value="UniProtKB-EC"/>
</dbReference>
<dbReference type="GO" id="GO:0006777">
    <property type="term" value="P:Mo-molybdopterin cofactor biosynthetic process"/>
    <property type="evidence" value="ECO:0007669"/>
    <property type="project" value="UniProtKB-KW"/>
</dbReference>
<dbReference type="CDD" id="cd02503">
    <property type="entry name" value="MobA"/>
    <property type="match status" value="1"/>
</dbReference>
<dbReference type="Gene3D" id="3.90.550.10">
    <property type="entry name" value="Spore Coat Polysaccharide Biosynthesis Protein SpsA, Chain A"/>
    <property type="match status" value="1"/>
</dbReference>
<dbReference type="HAMAP" id="MF_00316">
    <property type="entry name" value="MobA"/>
    <property type="match status" value="1"/>
</dbReference>
<dbReference type="InterPro" id="IPR025877">
    <property type="entry name" value="MobA-like_NTP_Trfase"/>
</dbReference>
<dbReference type="InterPro" id="IPR013482">
    <property type="entry name" value="Molybde_CF_guanTrfase"/>
</dbReference>
<dbReference type="InterPro" id="IPR029044">
    <property type="entry name" value="Nucleotide-diphossugar_trans"/>
</dbReference>
<dbReference type="PANTHER" id="PTHR19136">
    <property type="entry name" value="MOLYBDENUM COFACTOR GUANYLYLTRANSFERASE"/>
    <property type="match status" value="1"/>
</dbReference>
<dbReference type="PANTHER" id="PTHR19136:SF81">
    <property type="entry name" value="MOLYBDENUM COFACTOR GUANYLYLTRANSFERASE"/>
    <property type="match status" value="1"/>
</dbReference>
<dbReference type="Pfam" id="PF12804">
    <property type="entry name" value="NTP_transf_3"/>
    <property type="match status" value="1"/>
</dbReference>
<dbReference type="SUPFAM" id="SSF53448">
    <property type="entry name" value="Nucleotide-diphospho-sugar transferases"/>
    <property type="match status" value="1"/>
</dbReference>
<gene>
    <name evidence="1" type="primary">mobA</name>
    <name type="ordered locus">MM_2793</name>
</gene>
<feature type="chain" id="PRO_0000134929" description="Probable molybdenum cofactor guanylyltransferase">
    <location>
        <begin position="1"/>
        <end position="224"/>
    </location>
</feature>
<feature type="binding site" evidence="1">
    <location>
        <begin position="20"/>
        <end position="22"/>
    </location>
    <ligand>
        <name>GTP</name>
        <dbReference type="ChEBI" id="CHEBI:37565"/>
    </ligand>
</feature>
<feature type="binding site" evidence="1">
    <location>
        <position position="33"/>
    </location>
    <ligand>
        <name>GTP</name>
        <dbReference type="ChEBI" id="CHEBI:37565"/>
    </ligand>
</feature>
<feature type="binding site" evidence="1">
    <location>
        <position position="88"/>
    </location>
    <ligand>
        <name>GTP</name>
        <dbReference type="ChEBI" id="CHEBI:37565"/>
    </ligand>
</feature>
<feature type="binding site" evidence="1">
    <location>
        <position position="117"/>
    </location>
    <ligand>
        <name>GTP</name>
        <dbReference type="ChEBI" id="CHEBI:37565"/>
    </ligand>
</feature>
<feature type="binding site" evidence="1">
    <location>
        <position position="117"/>
    </location>
    <ligand>
        <name>Mg(2+)</name>
        <dbReference type="ChEBI" id="CHEBI:18420"/>
    </ligand>
</feature>
<keyword id="KW-0963">Cytoplasm</keyword>
<keyword id="KW-0342">GTP-binding</keyword>
<keyword id="KW-0460">Magnesium</keyword>
<keyword id="KW-0479">Metal-binding</keyword>
<keyword id="KW-0501">Molybdenum cofactor biosynthesis</keyword>
<keyword id="KW-0547">Nucleotide-binding</keyword>
<keyword id="KW-0808">Transferase</keyword>
<proteinExistence type="inferred from homology"/>
<evidence type="ECO:0000255" key="1">
    <source>
        <dbReference type="HAMAP-Rule" id="MF_00316"/>
    </source>
</evidence>
<name>MOBA_METMA</name>
<sequence>MNKKTESKEQKRSFRSAIVLAGGRGRRMGMVEKALLEFERKTILERLLENLFRVVDEVILSVRDNSQKEKLFPVLDKFPDREIRFCFDSLEDAGPLEGIRAGLLESRSENSFVCAGDMPFVNPEIVDLLFEKASGHDAAIPRWEERMFEPLHAVYSKKMLPEIEKAFERGKHSVLAPVFQMQDVVFVEVSEIREFDPELRTFVNINTVEDLENMIGHAKEKVGL</sequence>
<reference key="1">
    <citation type="journal article" date="2002" name="J. Mol. Microbiol. Biotechnol.">
        <title>The genome of Methanosarcina mazei: evidence for lateral gene transfer between Bacteria and Archaea.</title>
        <authorList>
            <person name="Deppenmeier U."/>
            <person name="Johann A."/>
            <person name="Hartsch T."/>
            <person name="Merkl R."/>
            <person name="Schmitz R.A."/>
            <person name="Martinez-Arias R."/>
            <person name="Henne A."/>
            <person name="Wiezer A."/>
            <person name="Baeumer S."/>
            <person name="Jacobi C."/>
            <person name="Brueggemann H."/>
            <person name="Lienard T."/>
            <person name="Christmann A."/>
            <person name="Boemecke M."/>
            <person name="Steckel S."/>
            <person name="Bhattacharyya A."/>
            <person name="Lykidis A."/>
            <person name="Overbeek R."/>
            <person name="Klenk H.-P."/>
            <person name="Gunsalus R.P."/>
            <person name="Fritz H.-J."/>
            <person name="Gottschalk G."/>
        </authorList>
    </citation>
    <scope>NUCLEOTIDE SEQUENCE [LARGE SCALE GENOMIC DNA]</scope>
    <source>
        <strain>ATCC BAA-159 / DSM 3647 / Goe1 / Go1 / JCM 11833 / OCM 88</strain>
    </source>
</reference>